<comment type="function">
    <text evidence="1">Catalyzes the attachment of tyrosine to tRNA(Tyr) in a two-step reaction: tyrosine is first activated by ATP to form Tyr-AMP and then transferred to the acceptor end of tRNA(Tyr).</text>
</comment>
<comment type="catalytic activity">
    <reaction evidence="1">
        <text>tRNA(Tyr) + L-tyrosine + ATP = L-tyrosyl-tRNA(Tyr) + AMP + diphosphate + H(+)</text>
        <dbReference type="Rhea" id="RHEA:10220"/>
        <dbReference type="Rhea" id="RHEA-COMP:9706"/>
        <dbReference type="Rhea" id="RHEA-COMP:9707"/>
        <dbReference type="ChEBI" id="CHEBI:15378"/>
        <dbReference type="ChEBI" id="CHEBI:30616"/>
        <dbReference type="ChEBI" id="CHEBI:33019"/>
        <dbReference type="ChEBI" id="CHEBI:58315"/>
        <dbReference type="ChEBI" id="CHEBI:78442"/>
        <dbReference type="ChEBI" id="CHEBI:78536"/>
        <dbReference type="ChEBI" id="CHEBI:456215"/>
        <dbReference type="EC" id="6.1.1.1"/>
    </reaction>
</comment>
<comment type="subunit">
    <text evidence="1">Homodimer.</text>
</comment>
<comment type="subcellular location">
    <subcellularLocation>
        <location evidence="1">Cytoplasm</location>
    </subcellularLocation>
</comment>
<comment type="similarity">
    <text evidence="1">Belongs to the class-I aminoacyl-tRNA synthetase family. TyrS type 1 subfamily.</text>
</comment>
<organism>
    <name type="scientific">Yersinia enterocolitica serotype O:8 / biotype 1B (strain NCTC 13174 / 8081)</name>
    <dbReference type="NCBI Taxonomy" id="393305"/>
    <lineage>
        <taxon>Bacteria</taxon>
        <taxon>Pseudomonadati</taxon>
        <taxon>Pseudomonadota</taxon>
        <taxon>Gammaproteobacteria</taxon>
        <taxon>Enterobacterales</taxon>
        <taxon>Yersiniaceae</taxon>
        <taxon>Yersinia</taxon>
    </lineage>
</organism>
<feature type="chain" id="PRO_1000088642" description="Tyrosine--tRNA ligase">
    <location>
        <begin position="1"/>
        <end position="424"/>
    </location>
</feature>
<feature type="domain" description="S4 RNA-binding" evidence="1">
    <location>
        <begin position="357"/>
        <end position="414"/>
    </location>
</feature>
<feature type="short sequence motif" description="'HIGH' region">
    <location>
        <begin position="42"/>
        <end position="51"/>
    </location>
</feature>
<feature type="short sequence motif" description="'KMSKS' region">
    <location>
        <begin position="235"/>
        <end position="239"/>
    </location>
</feature>
<feature type="binding site" evidence="1">
    <location>
        <position position="37"/>
    </location>
    <ligand>
        <name>L-tyrosine</name>
        <dbReference type="ChEBI" id="CHEBI:58315"/>
    </ligand>
</feature>
<feature type="binding site" evidence="1">
    <location>
        <position position="175"/>
    </location>
    <ligand>
        <name>L-tyrosine</name>
        <dbReference type="ChEBI" id="CHEBI:58315"/>
    </ligand>
</feature>
<feature type="binding site" evidence="1">
    <location>
        <position position="179"/>
    </location>
    <ligand>
        <name>L-tyrosine</name>
        <dbReference type="ChEBI" id="CHEBI:58315"/>
    </ligand>
</feature>
<feature type="binding site" evidence="1">
    <location>
        <position position="238"/>
    </location>
    <ligand>
        <name>ATP</name>
        <dbReference type="ChEBI" id="CHEBI:30616"/>
    </ligand>
</feature>
<dbReference type="EC" id="6.1.1.1" evidence="1"/>
<dbReference type="EMBL" id="AM286415">
    <property type="protein sequence ID" value="CAL12209.1"/>
    <property type="molecule type" value="Genomic_DNA"/>
</dbReference>
<dbReference type="RefSeq" id="WP_011816372.1">
    <property type="nucleotide sequence ID" value="NC_008800.1"/>
</dbReference>
<dbReference type="RefSeq" id="YP_001006379.1">
    <property type="nucleotide sequence ID" value="NC_008800.1"/>
</dbReference>
<dbReference type="SMR" id="A1JNV3"/>
<dbReference type="KEGG" id="yen:YE2139"/>
<dbReference type="PATRIC" id="fig|393305.7.peg.2302"/>
<dbReference type="eggNOG" id="COG0162">
    <property type="taxonomic scope" value="Bacteria"/>
</dbReference>
<dbReference type="HOGENOM" id="CLU_024003_0_3_6"/>
<dbReference type="OrthoDB" id="9804243at2"/>
<dbReference type="Proteomes" id="UP000000642">
    <property type="component" value="Chromosome"/>
</dbReference>
<dbReference type="GO" id="GO:0005829">
    <property type="term" value="C:cytosol"/>
    <property type="evidence" value="ECO:0007669"/>
    <property type="project" value="TreeGrafter"/>
</dbReference>
<dbReference type="GO" id="GO:0005524">
    <property type="term" value="F:ATP binding"/>
    <property type="evidence" value="ECO:0007669"/>
    <property type="project" value="UniProtKB-UniRule"/>
</dbReference>
<dbReference type="GO" id="GO:0003723">
    <property type="term" value="F:RNA binding"/>
    <property type="evidence" value="ECO:0007669"/>
    <property type="project" value="UniProtKB-KW"/>
</dbReference>
<dbReference type="GO" id="GO:0004831">
    <property type="term" value="F:tyrosine-tRNA ligase activity"/>
    <property type="evidence" value="ECO:0007669"/>
    <property type="project" value="UniProtKB-UniRule"/>
</dbReference>
<dbReference type="GO" id="GO:0006437">
    <property type="term" value="P:tyrosyl-tRNA aminoacylation"/>
    <property type="evidence" value="ECO:0007669"/>
    <property type="project" value="UniProtKB-UniRule"/>
</dbReference>
<dbReference type="CDD" id="cd00165">
    <property type="entry name" value="S4"/>
    <property type="match status" value="1"/>
</dbReference>
<dbReference type="CDD" id="cd00805">
    <property type="entry name" value="TyrRS_core"/>
    <property type="match status" value="1"/>
</dbReference>
<dbReference type="FunFam" id="1.10.240.10:FF:000001">
    <property type="entry name" value="Tyrosine--tRNA ligase"/>
    <property type="match status" value="1"/>
</dbReference>
<dbReference type="FunFam" id="3.40.50.620:FF:000008">
    <property type="entry name" value="Tyrosine--tRNA ligase"/>
    <property type="match status" value="1"/>
</dbReference>
<dbReference type="Gene3D" id="3.40.50.620">
    <property type="entry name" value="HUPs"/>
    <property type="match status" value="1"/>
</dbReference>
<dbReference type="Gene3D" id="3.10.290.10">
    <property type="entry name" value="RNA-binding S4 domain"/>
    <property type="match status" value="1"/>
</dbReference>
<dbReference type="Gene3D" id="1.10.240.10">
    <property type="entry name" value="Tyrosyl-Transfer RNA Synthetase"/>
    <property type="match status" value="1"/>
</dbReference>
<dbReference type="HAMAP" id="MF_02006">
    <property type="entry name" value="Tyr_tRNA_synth_type1"/>
    <property type="match status" value="1"/>
</dbReference>
<dbReference type="InterPro" id="IPR001412">
    <property type="entry name" value="aa-tRNA-synth_I_CS"/>
</dbReference>
<dbReference type="InterPro" id="IPR002305">
    <property type="entry name" value="aa-tRNA-synth_Ic"/>
</dbReference>
<dbReference type="InterPro" id="IPR014729">
    <property type="entry name" value="Rossmann-like_a/b/a_fold"/>
</dbReference>
<dbReference type="InterPro" id="IPR002942">
    <property type="entry name" value="S4_RNA-bd"/>
</dbReference>
<dbReference type="InterPro" id="IPR036986">
    <property type="entry name" value="S4_RNA-bd_sf"/>
</dbReference>
<dbReference type="InterPro" id="IPR054608">
    <property type="entry name" value="SYY-like_C"/>
</dbReference>
<dbReference type="InterPro" id="IPR002307">
    <property type="entry name" value="Tyr-tRNA-ligase"/>
</dbReference>
<dbReference type="InterPro" id="IPR024088">
    <property type="entry name" value="Tyr-tRNA-ligase_bac-type"/>
</dbReference>
<dbReference type="InterPro" id="IPR024107">
    <property type="entry name" value="Tyr-tRNA-ligase_bac_1"/>
</dbReference>
<dbReference type="NCBIfam" id="TIGR00234">
    <property type="entry name" value="tyrS"/>
    <property type="match status" value="1"/>
</dbReference>
<dbReference type="PANTHER" id="PTHR11766:SF0">
    <property type="entry name" value="TYROSINE--TRNA LIGASE, MITOCHONDRIAL"/>
    <property type="match status" value="1"/>
</dbReference>
<dbReference type="PANTHER" id="PTHR11766">
    <property type="entry name" value="TYROSYL-TRNA SYNTHETASE"/>
    <property type="match status" value="1"/>
</dbReference>
<dbReference type="Pfam" id="PF22421">
    <property type="entry name" value="SYY_C-terminal"/>
    <property type="match status" value="1"/>
</dbReference>
<dbReference type="Pfam" id="PF00579">
    <property type="entry name" value="tRNA-synt_1b"/>
    <property type="match status" value="1"/>
</dbReference>
<dbReference type="PRINTS" id="PR01040">
    <property type="entry name" value="TRNASYNTHTYR"/>
</dbReference>
<dbReference type="SMART" id="SM00363">
    <property type="entry name" value="S4"/>
    <property type="match status" value="1"/>
</dbReference>
<dbReference type="SUPFAM" id="SSF55174">
    <property type="entry name" value="Alpha-L RNA-binding motif"/>
    <property type="match status" value="1"/>
</dbReference>
<dbReference type="SUPFAM" id="SSF52374">
    <property type="entry name" value="Nucleotidylyl transferase"/>
    <property type="match status" value="1"/>
</dbReference>
<dbReference type="PROSITE" id="PS00178">
    <property type="entry name" value="AA_TRNA_LIGASE_I"/>
    <property type="match status" value="1"/>
</dbReference>
<dbReference type="PROSITE" id="PS50889">
    <property type="entry name" value="S4"/>
    <property type="match status" value="1"/>
</dbReference>
<keyword id="KW-0030">Aminoacyl-tRNA synthetase</keyword>
<keyword id="KW-0067">ATP-binding</keyword>
<keyword id="KW-0963">Cytoplasm</keyword>
<keyword id="KW-0436">Ligase</keyword>
<keyword id="KW-0547">Nucleotide-binding</keyword>
<keyword id="KW-0648">Protein biosynthesis</keyword>
<keyword id="KW-0694">RNA-binding</keyword>
<accession>A1JNV3</accession>
<proteinExistence type="inferred from homology"/>
<evidence type="ECO:0000255" key="1">
    <source>
        <dbReference type="HAMAP-Rule" id="MF_02006"/>
    </source>
</evidence>
<gene>
    <name evidence="1" type="primary">tyrS</name>
    <name type="ordered locus">YE2139</name>
</gene>
<reference key="1">
    <citation type="journal article" date="2006" name="PLoS Genet.">
        <title>The complete genome sequence and comparative genome analysis of the high pathogenicity Yersinia enterocolitica strain 8081.</title>
        <authorList>
            <person name="Thomson N.R."/>
            <person name="Howard S."/>
            <person name="Wren B.W."/>
            <person name="Holden M.T.G."/>
            <person name="Crossman L."/>
            <person name="Challis G.L."/>
            <person name="Churcher C."/>
            <person name="Mungall K."/>
            <person name="Brooks K."/>
            <person name="Chillingworth T."/>
            <person name="Feltwell T."/>
            <person name="Abdellah Z."/>
            <person name="Hauser H."/>
            <person name="Jagels K."/>
            <person name="Maddison M."/>
            <person name="Moule S."/>
            <person name="Sanders M."/>
            <person name="Whitehead S."/>
            <person name="Quail M.A."/>
            <person name="Dougan G."/>
            <person name="Parkhill J."/>
            <person name="Prentice M.B."/>
        </authorList>
    </citation>
    <scope>NUCLEOTIDE SEQUENCE [LARGE SCALE GENOMIC DNA]</scope>
    <source>
        <strain>NCTC 13174 / 8081</strain>
    </source>
</reference>
<sequence>MTSSNLIKQLQERGLVAQVTDEDALAERLAQGPISLYCGFDPTADSLHLGHLVPLLCLKRFQLAGHRPVALVGGATGMIGDPSFKASERKLNTEDTVNEWVEKIRRQVSPFLDFDCGDNSAIAANNYDWFGGMNVLTFLRDIGKHFSVNQMINKEAVKQRLNRDDSGISFTEFSYNLLQAYDFACLNKAHGVALQIGGSDQWGNITSGIDLTRRLHQQQVYGLTVPLITKADGTKFGKTEGGAVWLDPKKTSPYKFYQFWINTADADVYRFLKFFTFMNLEEINALEEEDKNSGKAPRAQYVLAENVTGMVHGEEGLAAAKRITASLFSGDLNDMTEADFAQLAQDGMPTIELTRDADLQQALVNAELVPSRGQARTMISSNAVAINGEKQSDPEYAFTDADRLFGRYTLLRRGKKHYCLISWL</sequence>
<protein>
    <recommendedName>
        <fullName evidence="1">Tyrosine--tRNA ligase</fullName>
        <ecNumber evidence="1">6.1.1.1</ecNumber>
    </recommendedName>
    <alternativeName>
        <fullName evidence="1">Tyrosyl-tRNA synthetase</fullName>
        <shortName evidence="1">TyrRS</shortName>
    </alternativeName>
</protein>
<name>SYY_YERE8</name>